<reference key="1">
    <citation type="journal article" date="2012" name="PLoS ONE">
        <title>Purification and characterization of two new allergens from the venom of Vespa magnifica.</title>
        <authorList>
            <person name="An S."/>
            <person name="Chen L."/>
            <person name="Wei J.F."/>
            <person name="Yang X."/>
            <person name="Ma D."/>
            <person name="Xu X."/>
            <person name="Xu X."/>
            <person name="He S."/>
            <person name="Lu J."/>
            <person name="Lai R."/>
        </authorList>
    </citation>
    <scope>NUCLEOTIDE SEQUENCE [MRNA]</scope>
    <scope>PROTEIN SEQUENCE OF 27-54; 73-91; 125-135; 200-220; 283-304 AND 339-357</scope>
    <scope>SUBCELLULAR LOCATION</scope>
    <scope>ALLERGEN</scope>
    <source>
        <tissue>Venom</tissue>
        <tissue>Venom gland</tissue>
    </source>
</reference>
<sequence>MLLVTLFLFFLQALVNGDSCGSNCEKSERPKRVFNIYWNVPTFMCHQYGLYFDEVTNFNIKHNSKDNFQGDKIAIFYDPGEFPALLPLNYGKYKIRNGGVPQEGNITIHLQRFIEYLDKTYPNRNFSGIGVIDFERWRPIFRQNWGNMKIYKNFSIDLVRKEHPFWNKKMIELEASKRFEKYARLFMEETLKLAKKTRKQADWGYYGYPYCFNMSPTNFVPDCDVTARDENNEMSWLFNNQNVLLPSVYIRRELTPDQRIGLVQGRVKEAVRISNKLKHSPKVFSYWWYVYQDETNTFLTETDVKKTFQEIVINGGDGIIIWGSSSDVNSLSKCTRLREYLLTVLGPIAVNVTEAVN</sequence>
<keyword id="KW-0020">Allergen</keyword>
<keyword id="KW-0903">Direct protein sequencing</keyword>
<keyword id="KW-1015">Disulfide bond</keyword>
<keyword id="KW-0325">Glycoprotein</keyword>
<keyword id="KW-0326">Glycosidase</keyword>
<keyword id="KW-0378">Hydrolase</keyword>
<keyword id="KW-0964">Secreted</keyword>
<keyword id="KW-0732">Signal</keyword>
<protein>
    <recommendedName>
        <fullName>Hyaluronidase</fullName>
        <shortName evidence="2">Hya</shortName>
        <ecNumber>3.2.1.35</ecNumber>
    </recommendedName>
    <alternativeName>
        <fullName evidence="2">Hyaluronoglucosaminidase</fullName>
    </alternativeName>
    <allergenName>Vesp ma 2</allergenName>
</protein>
<proteinExistence type="evidence at protein level"/>
<name>HUGA_VESMG</name>
<feature type="signal peptide" evidence="4">
    <location>
        <begin position="1"/>
        <end position="26"/>
    </location>
</feature>
<feature type="chain" id="PRO_0000405128" description="Hyaluronidase">
    <location>
        <begin position="27"/>
        <end position="357"/>
    </location>
</feature>
<feature type="active site" description="Proton donor" evidence="2">
    <location>
        <position position="135"/>
    </location>
</feature>
<feature type="glycosylation site" description="N-linked (GlcNAc...) asparagine" evidence="3">
    <location>
        <position position="105"/>
    </location>
</feature>
<feature type="glycosylation site" description="N-linked (GlcNAc...) asparagine" evidence="3">
    <location>
        <position position="125"/>
    </location>
</feature>
<feature type="glycosylation site" description="N-linked (GlcNAc...) asparagine" evidence="3">
    <location>
        <position position="153"/>
    </location>
</feature>
<feature type="glycosylation site" description="N-linked (GlcNAc...) asparagine" evidence="3">
    <location>
        <position position="351"/>
    </location>
</feature>
<feature type="disulfide bond" evidence="2">
    <location>
        <begin position="45"/>
        <end position="334"/>
    </location>
</feature>
<feature type="disulfide bond" evidence="2">
    <location>
        <begin position="211"/>
        <end position="223"/>
    </location>
</feature>
<feature type="sequence conflict" description="In Ref. 1; AA sequence." evidence="5" ref="1">
    <original>R</original>
    <variation>P</variation>
    <location>
        <position position="160"/>
    </location>
</feature>
<feature type="sequence conflict" description="In Ref. 1; AA sequence." evidence="5" ref="1">
    <original>E</original>
    <variation>G</variation>
    <location>
        <position position="172"/>
    </location>
</feature>
<feature type="sequence conflict" description="In Ref. 1; AA sequence." evidence="5" ref="1">
    <original>N</original>
    <variation>S</variation>
    <location>
        <position position="314"/>
    </location>
</feature>
<feature type="sequence conflict" description="In Ref. 1; AA sequence." evidence="5" ref="1">
    <original>T</original>
    <variation>M</variation>
    <location>
        <position position="335"/>
    </location>
</feature>
<organism>
    <name type="scientific">Vespa magnifica</name>
    <name type="common">Hornet</name>
    <dbReference type="NCBI Taxonomy" id="202807"/>
    <lineage>
        <taxon>Eukaryota</taxon>
        <taxon>Metazoa</taxon>
        <taxon>Ecdysozoa</taxon>
        <taxon>Arthropoda</taxon>
        <taxon>Hexapoda</taxon>
        <taxon>Insecta</taxon>
        <taxon>Pterygota</taxon>
        <taxon>Neoptera</taxon>
        <taxon>Endopterygota</taxon>
        <taxon>Hymenoptera</taxon>
        <taxon>Apocrita</taxon>
        <taxon>Aculeata</taxon>
        <taxon>Vespoidea</taxon>
        <taxon>Vespidae</taxon>
        <taxon>Vespinae</taxon>
        <taxon>Vespa</taxon>
    </lineage>
</organism>
<evidence type="ECO:0000250" key="1"/>
<evidence type="ECO:0000250" key="2">
    <source>
        <dbReference type="UniProtKB" id="Q08169"/>
    </source>
</evidence>
<evidence type="ECO:0000255" key="3"/>
<evidence type="ECO:0000269" key="4">
    <source>
    </source>
</evidence>
<evidence type="ECO:0000305" key="5"/>
<dbReference type="EC" id="3.2.1.35"/>
<dbReference type="EMBL" id="FR749885">
    <property type="protein sequence ID" value="CBY83816.1"/>
    <property type="molecule type" value="mRNA"/>
</dbReference>
<dbReference type="SMR" id="P86875"/>
<dbReference type="Allergome" id="9454">
    <property type="allergen name" value="Vesp ma 2"/>
</dbReference>
<dbReference type="CAZy" id="GH56">
    <property type="family name" value="Glycoside Hydrolase Family 56"/>
</dbReference>
<dbReference type="GO" id="GO:0005576">
    <property type="term" value="C:extracellular region"/>
    <property type="evidence" value="ECO:0007669"/>
    <property type="project" value="UniProtKB-SubCell"/>
</dbReference>
<dbReference type="GO" id="GO:0004415">
    <property type="term" value="F:hyalurononglucosaminidase activity"/>
    <property type="evidence" value="ECO:0007669"/>
    <property type="project" value="UniProtKB-EC"/>
</dbReference>
<dbReference type="GO" id="GO:0005975">
    <property type="term" value="P:carbohydrate metabolic process"/>
    <property type="evidence" value="ECO:0007669"/>
    <property type="project" value="InterPro"/>
</dbReference>
<dbReference type="GO" id="GO:0006952">
    <property type="term" value="P:defense response"/>
    <property type="evidence" value="ECO:0007669"/>
    <property type="project" value="InterPro"/>
</dbReference>
<dbReference type="GO" id="GO:0030214">
    <property type="term" value="P:hyaluronan catabolic process"/>
    <property type="evidence" value="ECO:0007669"/>
    <property type="project" value="TreeGrafter"/>
</dbReference>
<dbReference type="Gene3D" id="3.20.20.70">
    <property type="entry name" value="Aldolase class I"/>
    <property type="match status" value="1"/>
</dbReference>
<dbReference type="InterPro" id="IPR013785">
    <property type="entry name" value="Aldolase_TIM"/>
</dbReference>
<dbReference type="InterPro" id="IPR017853">
    <property type="entry name" value="Glycoside_hydrolase_SF"/>
</dbReference>
<dbReference type="InterPro" id="IPR018155">
    <property type="entry name" value="Hyaluronidase"/>
</dbReference>
<dbReference type="InterPro" id="IPR001329">
    <property type="entry name" value="Venom_Hyaluronidase"/>
</dbReference>
<dbReference type="PANTHER" id="PTHR11769">
    <property type="entry name" value="HYALURONIDASE"/>
    <property type="match status" value="1"/>
</dbReference>
<dbReference type="PANTHER" id="PTHR11769:SF35">
    <property type="entry name" value="HYALURONIDASE"/>
    <property type="match status" value="1"/>
</dbReference>
<dbReference type="Pfam" id="PF01630">
    <property type="entry name" value="Glyco_hydro_56"/>
    <property type="match status" value="1"/>
</dbReference>
<dbReference type="PIRSF" id="PIRSF038193">
    <property type="entry name" value="Hyaluronidase"/>
    <property type="match status" value="1"/>
</dbReference>
<dbReference type="PRINTS" id="PR00846">
    <property type="entry name" value="GLHYDRLASE56"/>
</dbReference>
<dbReference type="PRINTS" id="PR00847">
    <property type="entry name" value="HYALURONDASE"/>
</dbReference>
<dbReference type="SUPFAM" id="SSF51445">
    <property type="entry name" value="(Trans)glycosidases"/>
    <property type="match status" value="1"/>
</dbReference>
<accession>P86875</accession>
<accession>E7BBB9</accession>
<comment type="function">
    <text evidence="1">Hydrolyzes high molecular weight hyaluronic acid to produce small oligosaccharides.</text>
</comment>
<comment type="catalytic activity">
    <reaction evidence="2">
        <text>Random hydrolysis of (1-&gt;4)-linkages between N-acetyl-beta-D-glucosamine and D-glucuronate residues in hyaluronate.</text>
        <dbReference type="EC" id="3.2.1.35"/>
    </reaction>
</comment>
<comment type="subcellular location">
    <subcellularLocation>
        <location evidence="2 4">Secreted</location>
    </subcellularLocation>
</comment>
<comment type="allergen">
    <text evidence="4">Causes an allergic reaction in human. Binds to IgE.</text>
</comment>
<comment type="similarity">
    <text evidence="3">Belongs to the glycosyl hydrolase 56 family.</text>
</comment>